<reference key="1">
    <citation type="journal article" date="1994" name="Gene">
        <title>Sequences of the rplJL operon containing the L10 and L7/L12 genes from Brucella abortus.</title>
        <authorList>
            <person name="Oliveira S.C."/>
            <person name="Zhu Y."/>
            <person name="Splitter G.A."/>
        </authorList>
    </citation>
    <scope>NUCLEOTIDE SEQUENCE [GENOMIC DNA]</scope>
    <source>
        <strain>19</strain>
    </source>
</reference>
<reference key="2">
    <citation type="book" date="1998" name="Networking in Brucellosis Research II - Proceedings of the UNU-BIOLAC Brucellosis Workshop">
        <title>Genetic organization of the rplJL-rpoB operon in Brucella abortus.</title>
        <editorList>
            <person name="Frank J.F."/>
        </editorList>
        <authorList>
            <person name="Campos E."/>
            <person name="Cravero S."/>
            <person name="Boschiroli M.L."/>
            <person name="Arese A.I."/>
            <person name="Rossetti O.L."/>
        </authorList>
    </citation>
    <scope>NUCLEOTIDE SEQUENCE [GENOMIC DNA]</scope>
    <source>
        <strain>19</strain>
    </source>
</reference>
<reference key="3">
    <citation type="journal article" date="2005" name="J. Bacteriol.">
        <title>Completion of the genome sequence of Brucella abortus and comparison to the highly similar genomes of Brucella melitensis and Brucella suis.</title>
        <authorList>
            <person name="Halling S.M."/>
            <person name="Peterson-Burch B.D."/>
            <person name="Bricker B.J."/>
            <person name="Zuerner R.L."/>
            <person name="Qing Z."/>
            <person name="Li L.-L."/>
            <person name="Kapur V."/>
            <person name="Alt D.P."/>
            <person name="Olsen S.C."/>
        </authorList>
    </citation>
    <scope>NUCLEOTIDE SEQUENCE [LARGE SCALE GENOMIC DNA]</scope>
    <source>
        <strain>9-941</strain>
    </source>
</reference>
<feature type="chain" id="PRO_0000157507" description="Large ribosomal subunit protein bL12">
    <location>
        <begin position="1"/>
        <end position="124"/>
    </location>
</feature>
<feature type="sequence conflict" description="In Ref. 2; AAD51621." evidence="2" ref="2">
    <original>K</original>
    <variation>N</variation>
    <location>
        <position position="104"/>
    </location>
</feature>
<organism>
    <name type="scientific">Brucella abortus biovar 1 (strain 9-941)</name>
    <dbReference type="NCBI Taxonomy" id="262698"/>
    <lineage>
        <taxon>Bacteria</taxon>
        <taxon>Pseudomonadati</taxon>
        <taxon>Pseudomonadota</taxon>
        <taxon>Alphaproteobacteria</taxon>
        <taxon>Hyphomicrobiales</taxon>
        <taxon>Brucellaceae</taxon>
        <taxon>Brucella/Ochrobactrum group</taxon>
        <taxon>Brucella</taxon>
    </lineage>
</organism>
<sequence length="124" mass="12546">MADLAKIVEDLSALTVLEAAELSKLLEEKWGVSAAAPVAVAAAGGAAPAAAAEEKTEFDVVLADGGANKINVIKEVRALTGLGLKEAKDLVEGAPKAVKEGASKDEAEKIKAQLEAAGAKVELK</sequence>
<comment type="function">
    <text evidence="1">Forms part of the ribosomal stalk which helps the ribosome interact with GTP-bound translation factors. Is thus essential for accurate translation.</text>
</comment>
<comment type="subunit">
    <text evidence="1">Homodimer. Part of the ribosomal stalk of the 50S ribosomal subunit. Forms a multimeric L10(L12)X complex, where L10 forms an elongated spine to which 2 to 4 L12 dimers bind in a sequential fashion. Binds GTP-bound translation factors.</text>
</comment>
<comment type="similarity">
    <text evidence="1">Belongs to the bacterial ribosomal protein bL12 family.</text>
</comment>
<protein>
    <recommendedName>
        <fullName evidence="1">Large ribosomal subunit protein bL12</fullName>
    </recommendedName>
    <alternativeName>
        <fullName evidence="2">50S ribosomal protein L7/L12</fullName>
    </alternativeName>
</protein>
<evidence type="ECO:0000255" key="1">
    <source>
        <dbReference type="HAMAP-Rule" id="MF_00368"/>
    </source>
</evidence>
<evidence type="ECO:0000305" key="2"/>
<name>RL7_BRUAB</name>
<keyword id="KW-0687">Ribonucleoprotein</keyword>
<keyword id="KW-0689">Ribosomal protein</keyword>
<proteinExistence type="inferred from homology"/>
<accession>P0A470</accession>
<accession>P41106</accession>
<accession>Q57CP7</accession>
<accession>Q9R2F1</accession>
<dbReference type="EMBL" id="L19101">
    <property type="protein sequence ID" value="AAA19863.1"/>
    <property type="molecule type" value="Unassigned_DNA"/>
</dbReference>
<dbReference type="EMBL" id="AF169147">
    <property type="protein sequence ID" value="AAD51621.1"/>
    <property type="molecule type" value="Genomic_DNA"/>
</dbReference>
<dbReference type="EMBL" id="AE017223">
    <property type="protein sequence ID" value="AAX74587.1"/>
    <property type="molecule type" value="Genomic_DNA"/>
</dbReference>
<dbReference type="PIR" id="I40348">
    <property type="entry name" value="I40348"/>
</dbReference>
<dbReference type="RefSeq" id="WP_002964371.1">
    <property type="nucleotide sequence ID" value="NC_006932.1"/>
</dbReference>
<dbReference type="SMR" id="P0A470"/>
<dbReference type="EnsemblBacteria" id="AAX74587">
    <property type="protein sequence ID" value="AAX74587"/>
    <property type="gene ID" value="BruAb1_1249"/>
</dbReference>
<dbReference type="GeneID" id="97533516"/>
<dbReference type="KEGG" id="bmb:BruAb1_1249"/>
<dbReference type="HOGENOM" id="CLU_086499_3_0_5"/>
<dbReference type="Proteomes" id="UP000000540">
    <property type="component" value="Chromosome I"/>
</dbReference>
<dbReference type="GO" id="GO:0022625">
    <property type="term" value="C:cytosolic large ribosomal subunit"/>
    <property type="evidence" value="ECO:0007669"/>
    <property type="project" value="TreeGrafter"/>
</dbReference>
<dbReference type="GO" id="GO:0003729">
    <property type="term" value="F:mRNA binding"/>
    <property type="evidence" value="ECO:0007669"/>
    <property type="project" value="TreeGrafter"/>
</dbReference>
<dbReference type="GO" id="GO:0003735">
    <property type="term" value="F:structural constituent of ribosome"/>
    <property type="evidence" value="ECO:0007669"/>
    <property type="project" value="InterPro"/>
</dbReference>
<dbReference type="GO" id="GO:0006412">
    <property type="term" value="P:translation"/>
    <property type="evidence" value="ECO:0007669"/>
    <property type="project" value="UniProtKB-UniRule"/>
</dbReference>
<dbReference type="CDD" id="cd00387">
    <property type="entry name" value="Ribosomal_L7_L12"/>
    <property type="match status" value="1"/>
</dbReference>
<dbReference type="FunFam" id="3.30.1390.10:FF:000001">
    <property type="entry name" value="50S ribosomal protein L7/L12"/>
    <property type="match status" value="1"/>
</dbReference>
<dbReference type="Gene3D" id="3.30.1390.10">
    <property type="match status" value="1"/>
</dbReference>
<dbReference type="Gene3D" id="1.20.5.710">
    <property type="entry name" value="Single helix bin"/>
    <property type="match status" value="1"/>
</dbReference>
<dbReference type="HAMAP" id="MF_00368">
    <property type="entry name" value="Ribosomal_bL12"/>
    <property type="match status" value="1"/>
</dbReference>
<dbReference type="InterPro" id="IPR000206">
    <property type="entry name" value="Ribosomal_bL12"/>
</dbReference>
<dbReference type="InterPro" id="IPR013823">
    <property type="entry name" value="Ribosomal_bL12_C"/>
</dbReference>
<dbReference type="InterPro" id="IPR014719">
    <property type="entry name" value="Ribosomal_bL12_C/ClpS-like"/>
</dbReference>
<dbReference type="InterPro" id="IPR008932">
    <property type="entry name" value="Ribosomal_bL12_oligo"/>
</dbReference>
<dbReference type="InterPro" id="IPR036235">
    <property type="entry name" value="Ribosomal_bL12_oligo_N_sf"/>
</dbReference>
<dbReference type="NCBIfam" id="TIGR00855">
    <property type="entry name" value="L12"/>
    <property type="match status" value="1"/>
</dbReference>
<dbReference type="PANTHER" id="PTHR45987">
    <property type="entry name" value="39S RIBOSOMAL PROTEIN L12"/>
    <property type="match status" value="1"/>
</dbReference>
<dbReference type="PANTHER" id="PTHR45987:SF4">
    <property type="entry name" value="LARGE RIBOSOMAL SUBUNIT PROTEIN BL12M"/>
    <property type="match status" value="1"/>
</dbReference>
<dbReference type="Pfam" id="PF00542">
    <property type="entry name" value="Ribosomal_L12"/>
    <property type="match status" value="1"/>
</dbReference>
<dbReference type="Pfam" id="PF16320">
    <property type="entry name" value="Ribosomal_L12_N"/>
    <property type="match status" value="1"/>
</dbReference>
<dbReference type="SUPFAM" id="SSF54736">
    <property type="entry name" value="ClpS-like"/>
    <property type="match status" value="1"/>
</dbReference>
<dbReference type="SUPFAM" id="SSF48300">
    <property type="entry name" value="Ribosomal protein L7/12, oligomerisation (N-terminal) domain"/>
    <property type="match status" value="1"/>
</dbReference>
<gene>
    <name evidence="1" type="primary">rplL</name>
    <name type="ordered locus">BruAb1_1249</name>
</gene>